<comment type="function">
    <text evidence="1">Presumably involved in the export of the biofilm adhesin polysaccharide poly-beta-1,6-N-acetyl-D-glucosamine (PNAG, also referred to as PIA) across the cell membrane.</text>
</comment>
<comment type="subcellular location">
    <subcellularLocation>
        <location evidence="3">Cell membrane</location>
        <topology evidence="3">Multi-pass membrane protein</topology>
    </subcellularLocation>
</comment>
<comment type="similarity">
    <text evidence="3">Belongs to the acyltransferase 3 family.</text>
</comment>
<organism>
    <name type="scientific">Staphylococcus aureus (strain MRSA252)</name>
    <dbReference type="NCBI Taxonomy" id="282458"/>
    <lineage>
        <taxon>Bacteria</taxon>
        <taxon>Bacillati</taxon>
        <taxon>Bacillota</taxon>
        <taxon>Bacilli</taxon>
        <taxon>Bacillales</taxon>
        <taxon>Staphylococcaceae</taxon>
        <taxon>Staphylococcus</taxon>
    </lineage>
</organism>
<dbReference type="EMBL" id="BX571856">
    <property type="protein sequence ID" value="CAG41726.1"/>
    <property type="molecule type" value="Genomic_DNA"/>
</dbReference>
<dbReference type="RefSeq" id="WP_000723844.1">
    <property type="nucleotide sequence ID" value="NC_002952.2"/>
</dbReference>
<dbReference type="KEGG" id="sar:SAR2750"/>
<dbReference type="HOGENOM" id="CLU_064947_1_0_9"/>
<dbReference type="Proteomes" id="UP000000596">
    <property type="component" value="Chromosome"/>
</dbReference>
<dbReference type="GO" id="GO:0005886">
    <property type="term" value="C:plasma membrane"/>
    <property type="evidence" value="ECO:0007669"/>
    <property type="project" value="UniProtKB-SubCell"/>
</dbReference>
<dbReference type="GO" id="GO:0016413">
    <property type="term" value="F:O-acetyltransferase activity"/>
    <property type="evidence" value="ECO:0007669"/>
    <property type="project" value="TreeGrafter"/>
</dbReference>
<dbReference type="GO" id="GO:0009246">
    <property type="term" value="P:enterobacterial common antigen biosynthetic process"/>
    <property type="evidence" value="ECO:0007669"/>
    <property type="project" value="TreeGrafter"/>
</dbReference>
<dbReference type="InterPro" id="IPR002656">
    <property type="entry name" value="Acyl_transf_3_dom"/>
</dbReference>
<dbReference type="PANTHER" id="PTHR40074">
    <property type="entry name" value="O-ACETYLTRANSFERASE WECH"/>
    <property type="match status" value="1"/>
</dbReference>
<dbReference type="PANTHER" id="PTHR40074:SF2">
    <property type="entry name" value="O-ACETYLTRANSFERASE WECH"/>
    <property type="match status" value="1"/>
</dbReference>
<dbReference type="Pfam" id="PF01757">
    <property type="entry name" value="Acyl_transf_3"/>
    <property type="match status" value="1"/>
</dbReference>
<feature type="chain" id="PRO_0000208074" description="Probable poly-beta-1,6-N-acetyl-D-glucosamine export protein">
    <location>
        <begin position="1"/>
        <end position="350"/>
    </location>
</feature>
<feature type="transmembrane region" description="Helical" evidence="2">
    <location>
        <begin position="7"/>
        <end position="29"/>
    </location>
</feature>
<feature type="transmembrane region" description="Helical" evidence="2">
    <location>
        <begin position="44"/>
        <end position="66"/>
    </location>
</feature>
<feature type="transmembrane region" description="Helical" evidence="2">
    <location>
        <begin position="79"/>
        <end position="101"/>
    </location>
</feature>
<feature type="transmembrane region" description="Helical" evidence="2">
    <location>
        <begin position="116"/>
        <end position="138"/>
    </location>
</feature>
<feature type="transmembrane region" description="Helical" evidence="2">
    <location>
        <begin position="145"/>
        <end position="167"/>
    </location>
</feature>
<feature type="transmembrane region" description="Helical" evidence="2">
    <location>
        <begin position="187"/>
        <end position="204"/>
    </location>
</feature>
<feature type="transmembrane region" description="Helical" evidence="2">
    <location>
        <begin position="211"/>
        <end position="233"/>
    </location>
</feature>
<feature type="transmembrane region" description="Helical" evidence="2">
    <location>
        <begin position="243"/>
        <end position="262"/>
    </location>
</feature>
<feature type="transmembrane region" description="Helical" evidence="2">
    <location>
        <begin position="269"/>
        <end position="291"/>
    </location>
</feature>
<feature type="transmembrane region" description="Helical" evidence="2">
    <location>
        <begin position="306"/>
        <end position="328"/>
    </location>
</feature>
<name>ICAC_STAAR</name>
<evidence type="ECO:0000250" key="1"/>
<evidence type="ECO:0000255" key="2"/>
<evidence type="ECO:0000305" key="3"/>
<proteinExistence type="inferred from homology"/>
<reference key="1">
    <citation type="journal article" date="2004" name="Proc. Natl. Acad. Sci. U.S.A.">
        <title>Complete genomes of two clinical Staphylococcus aureus strains: evidence for the rapid evolution of virulence and drug resistance.</title>
        <authorList>
            <person name="Holden M.T.G."/>
            <person name="Feil E.J."/>
            <person name="Lindsay J.A."/>
            <person name="Peacock S.J."/>
            <person name="Day N.P.J."/>
            <person name="Enright M.C."/>
            <person name="Foster T.J."/>
            <person name="Moore C.E."/>
            <person name="Hurst L."/>
            <person name="Atkin R."/>
            <person name="Barron A."/>
            <person name="Bason N."/>
            <person name="Bentley S.D."/>
            <person name="Chillingworth C."/>
            <person name="Chillingworth T."/>
            <person name="Churcher C."/>
            <person name="Clark L."/>
            <person name="Corton C."/>
            <person name="Cronin A."/>
            <person name="Doggett J."/>
            <person name="Dowd L."/>
            <person name="Feltwell T."/>
            <person name="Hance Z."/>
            <person name="Harris B."/>
            <person name="Hauser H."/>
            <person name="Holroyd S."/>
            <person name="Jagels K."/>
            <person name="James K.D."/>
            <person name="Lennard N."/>
            <person name="Line A."/>
            <person name="Mayes R."/>
            <person name="Moule S."/>
            <person name="Mungall K."/>
            <person name="Ormond D."/>
            <person name="Quail M.A."/>
            <person name="Rabbinowitsch E."/>
            <person name="Rutherford K.M."/>
            <person name="Sanders M."/>
            <person name="Sharp S."/>
            <person name="Simmonds M."/>
            <person name="Stevens K."/>
            <person name="Whitehead S."/>
            <person name="Barrell B.G."/>
            <person name="Spratt B.G."/>
            <person name="Parkhill J."/>
        </authorList>
    </citation>
    <scope>NUCLEOTIDE SEQUENCE [LARGE SCALE GENOMIC DNA]</scope>
    <source>
        <strain>MRSA252</strain>
    </source>
</reference>
<protein>
    <recommendedName>
        <fullName>Probable poly-beta-1,6-N-acetyl-D-glucosamine export protein</fullName>
        <shortName>PGA export protein</shortName>
        <shortName>Poly-beta-1,6-GlcNAc export protein</shortName>
    </recommendedName>
    <alternativeName>
        <fullName>Biofilm polysaccharide intercellular adhesin export protein</fullName>
        <shortName>Biofilm PIA export protein</shortName>
    </alternativeName>
    <alternativeName>
        <fullName>Intercellular adhesion protein C</fullName>
    </alternativeName>
</protein>
<accession>Q6GDD5</accession>
<keyword id="KW-1003">Cell membrane</keyword>
<keyword id="KW-0472">Membrane</keyword>
<keyword id="KW-0812">Transmembrane</keyword>
<keyword id="KW-1133">Transmembrane helix</keyword>
<keyword id="KW-0813">Transport</keyword>
<sequence length="350" mass="41358">MKKIRLELVYLRAIICAIIIVTHLLTQITLKHENMEGGSLVLQFYIRNIVIFGTPCFIILSQLLTTLNYQKVTYRYLTTRVKYILIPYILMGLFYSYSESLLTDTSFQKQFIENVLLGQWYGYFIVVIMQFFILSYIIFKINYNLFNSKILLLLSFILQQSFLYYFTNNTAFHDTVLHYYPLSENTIIFGWIFYFFLGAYMGYNYERVLNFLERYLVIMIVLAVATYFVFIALANGDYWNVTSFSYSLTPYNSIMFIVILGICTHFKTMLFNTIQMISAFSFFIYLLHPIILDSLFAYTNIFEDNTMVFLAISLLFILGLCIGVGMILREFYIFRFIIGKQPYKLNINAY</sequence>
<gene>
    <name type="primary">icaC</name>
    <name type="ordered locus">SAR2750</name>
</gene>